<reference key="1">
    <citation type="journal article" date="2009" name="Nature">
        <title>Evolution of pathogenicity and sexual reproduction in eight Candida genomes.</title>
        <authorList>
            <person name="Butler G."/>
            <person name="Rasmussen M.D."/>
            <person name="Lin M.F."/>
            <person name="Santos M.A.S."/>
            <person name="Sakthikumar S."/>
            <person name="Munro C.A."/>
            <person name="Rheinbay E."/>
            <person name="Grabherr M."/>
            <person name="Forche A."/>
            <person name="Reedy J.L."/>
            <person name="Agrafioti I."/>
            <person name="Arnaud M.B."/>
            <person name="Bates S."/>
            <person name="Brown A.J.P."/>
            <person name="Brunke S."/>
            <person name="Costanzo M.C."/>
            <person name="Fitzpatrick D.A."/>
            <person name="de Groot P.W.J."/>
            <person name="Harris D."/>
            <person name="Hoyer L.L."/>
            <person name="Hube B."/>
            <person name="Klis F.M."/>
            <person name="Kodira C."/>
            <person name="Lennard N."/>
            <person name="Logue M.E."/>
            <person name="Martin R."/>
            <person name="Neiman A.M."/>
            <person name="Nikolaou E."/>
            <person name="Quail M.A."/>
            <person name="Quinn J."/>
            <person name="Santos M.C."/>
            <person name="Schmitzberger F.F."/>
            <person name="Sherlock G."/>
            <person name="Shah P."/>
            <person name="Silverstein K.A.T."/>
            <person name="Skrzypek M.S."/>
            <person name="Soll D."/>
            <person name="Staggs R."/>
            <person name="Stansfield I."/>
            <person name="Stumpf M.P.H."/>
            <person name="Sudbery P.E."/>
            <person name="Srikantha T."/>
            <person name="Zeng Q."/>
            <person name="Berman J."/>
            <person name="Berriman M."/>
            <person name="Heitman J."/>
            <person name="Gow N.A.R."/>
            <person name="Lorenz M.C."/>
            <person name="Birren B.W."/>
            <person name="Kellis M."/>
            <person name="Cuomo C.A."/>
        </authorList>
    </citation>
    <scope>NUCLEOTIDE SEQUENCE [LARGE SCALE GENOMIC DNA]</scope>
    <source>
        <strain>WO-1</strain>
    </source>
</reference>
<dbReference type="EMBL" id="CM000310">
    <property type="protein sequence ID" value="EEQ44749.1"/>
    <property type="molecule type" value="Genomic_DNA"/>
</dbReference>
<dbReference type="PaxDb" id="5476-C4YP90"/>
<dbReference type="VEuPathDB" id="FungiDB:CAWG_03037"/>
<dbReference type="HOGENOM" id="CLU_028817_0_0_1"/>
<dbReference type="OMA" id="LRFKVWP"/>
<dbReference type="OrthoDB" id="10341at766764"/>
<dbReference type="Proteomes" id="UP000001429">
    <property type="component" value="Chromosome 3"/>
</dbReference>
<dbReference type="GO" id="GO:0005737">
    <property type="term" value="C:cytoplasm"/>
    <property type="evidence" value="ECO:0007669"/>
    <property type="project" value="UniProtKB-SubCell"/>
</dbReference>
<dbReference type="Gene3D" id="1.10.472.80">
    <property type="entry name" value="Ypt/Rab-GAP domain of gyp1p, domain 3"/>
    <property type="match status" value="1"/>
</dbReference>
<dbReference type="InterPro" id="IPR000195">
    <property type="entry name" value="Rab-GAP-TBC_dom"/>
</dbReference>
<dbReference type="InterPro" id="IPR035969">
    <property type="entry name" value="Rab-GAP_TBC_sf"/>
</dbReference>
<dbReference type="SMART" id="SM00164">
    <property type="entry name" value="TBC"/>
    <property type="match status" value="1"/>
</dbReference>
<dbReference type="SUPFAM" id="SSF47923">
    <property type="entry name" value="Ypt/Rab-GAP domain of gyp1p"/>
    <property type="match status" value="1"/>
</dbReference>
<dbReference type="PROSITE" id="PS50086">
    <property type="entry name" value="TBC_RABGAP"/>
    <property type="match status" value="1"/>
</dbReference>
<comment type="subcellular location">
    <subcellularLocation>
        <location evidence="1">Cytoplasm</location>
    </subcellularLocation>
</comment>
<comment type="similarity">
    <text evidence="4">Belongs to the OCA5 family.</text>
</comment>
<name>OCA5_CANAW</name>
<evidence type="ECO:0000250" key="1"/>
<evidence type="ECO:0000255" key="2">
    <source>
        <dbReference type="PROSITE-ProRule" id="PRU00163"/>
    </source>
</evidence>
<evidence type="ECO:0000256" key="3">
    <source>
        <dbReference type="SAM" id="MobiDB-lite"/>
    </source>
</evidence>
<evidence type="ECO:0000305" key="4"/>
<protein>
    <recommendedName>
        <fullName>Oxidant-induced cell-cycle arrest protein 5</fullName>
    </recommendedName>
</protein>
<proteinExistence type="inferred from homology"/>
<keyword id="KW-0963">Cytoplasm</keyword>
<gene>
    <name type="primary">OCA5</name>
    <name type="ORF">CAWG_03037</name>
</gene>
<feature type="chain" id="PRO_0000408207" description="Oxidant-induced cell-cycle arrest protein 5">
    <location>
        <begin position="1"/>
        <end position="717"/>
    </location>
</feature>
<feature type="domain" description="Rab-GAP TBC" evidence="2">
    <location>
        <begin position="100"/>
        <end position="460"/>
    </location>
</feature>
<feature type="region of interest" description="Disordered" evidence="3">
    <location>
        <begin position="1"/>
        <end position="66"/>
    </location>
</feature>
<feature type="region of interest" description="Disordered" evidence="3">
    <location>
        <begin position="132"/>
        <end position="209"/>
    </location>
</feature>
<feature type="region of interest" description="Disordered" evidence="3">
    <location>
        <begin position="353"/>
        <end position="377"/>
    </location>
</feature>
<feature type="region of interest" description="Disordered" evidence="3">
    <location>
        <begin position="503"/>
        <end position="522"/>
    </location>
</feature>
<feature type="region of interest" description="Disordered" evidence="3">
    <location>
        <begin position="555"/>
        <end position="583"/>
    </location>
</feature>
<feature type="region of interest" description="Disordered" evidence="3">
    <location>
        <begin position="636"/>
        <end position="670"/>
    </location>
</feature>
<feature type="compositionally biased region" description="Low complexity" evidence="3">
    <location>
        <begin position="1"/>
        <end position="25"/>
    </location>
</feature>
<feature type="compositionally biased region" description="Low complexity" evidence="3">
    <location>
        <begin position="132"/>
        <end position="155"/>
    </location>
</feature>
<feature type="compositionally biased region" description="Basic and acidic residues" evidence="3">
    <location>
        <begin position="189"/>
        <end position="209"/>
    </location>
</feature>
<feature type="compositionally biased region" description="Low complexity" evidence="3">
    <location>
        <begin position="504"/>
        <end position="515"/>
    </location>
</feature>
<feature type="compositionally biased region" description="Low complexity" evidence="3">
    <location>
        <begin position="560"/>
        <end position="582"/>
    </location>
</feature>
<feature type="compositionally biased region" description="Basic residues" evidence="3">
    <location>
        <begin position="636"/>
        <end position="645"/>
    </location>
</feature>
<feature type="compositionally biased region" description="Low complexity" evidence="3">
    <location>
        <begin position="647"/>
        <end position="658"/>
    </location>
</feature>
<organism>
    <name type="scientific">Candida albicans (strain WO-1)</name>
    <name type="common">Yeast</name>
    <dbReference type="NCBI Taxonomy" id="294748"/>
    <lineage>
        <taxon>Eukaryota</taxon>
        <taxon>Fungi</taxon>
        <taxon>Dikarya</taxon>
        <taxon>Ascomycota</taxon>
        <taxon>Saccharomycotina</taxon>
        <taxon>Pichiomycetes</taxon>
        <taxon>Debaryomycetaceae</taxon>
        <taxon>Candida/Lodderomyces clade</taxon>
        <taxon>Candida</taxon>
    </lineage>
</organism>
<accession>C4YP90</accession>
<sequence length="717" mass="81986">MLQTSKGSNSSSTSSSRSASISTATPNTIVEDEELLCGPKSELTPPAVANPLRPVSKSNTSVEDDSKPSFTYDLDVFNLCKEYLNTRNHHGLALIARQKGIPPILRFKVWPILLKSHPFVISPFIQPDSELLNESTSSRSNSSSSSSTGSNTPLSTAPGSIKDAAIIDGDANDNDNDSNSNSNDDDNDRDNNDANTKEKEEDEQNNKIREKIKRDLAKYIQRLKYSQSKYTVSETEHEILSILENAIMKFTLKWGKIIKYDSSLTWIALNLAEWFPPIPKTPWVLVGKEYSSSHQSLIVNFLDDYSNYIDNIPDLREYLERLIYHDEKISTISFREVYERLVLVLLHCPQPVSRRKKSDNQGQNQRRNQSEVQKDQQSFKVNKTTLPKTGGTIEERVSYFIYCLRKLIPELSQYFHEEQILTKFGCLDDEWLIWWLKFCGTKVWSKYDRGRIWDFMLGWRLKNPKRDFNYYYEKLNYVNRNTLEKLGPDIFWSVGNEEEDISGDNNVDANANEINNTEKTETGKLVKREGDIKRSSFKDLVNELSNELHISKRVSTDEVATSTSSPATTKMASSSSTSSTLTPNVSIPFSRVDPHVALIFISLSLLKSKENILVELDQHEIRQFLSRLPSKSYKYNQKRSTRQKRISYASNASSTSNSPMGQSPVDRDEDSIFPTSRIVISNDSKDQKHKVNFIDNIISEAGELWRKWLWSEMVEDN</sequence>